<gene>
    <name evidence="1" type="primary">lgt</name>
    <name type="ordered locus">ECS88_3123</name>
</gene>
<feature type="chain" id="PRO_1000137420" description="Phosphatidylglycerol--prolipoprotein diacylglyceryl transferase">
    <location>
        <begin position="1"/>
        <end position="291"/>
    </location>
</feature>
<feature type="transmembrane region" description="Helical" evidence="1">
    <location>
        <begin position="21"/>
        <end position="41"/>
    </location>
</feature>
<feature type="transmembrane region" description="Helical" evidence="1">
    <location>
        <begin position="60"/>
        <end position="80"/>
    </location>
</feature>
<feature type="transmembrane region" description="Helical" evidence="1">
    <location>
        <begin position="96"/>
        <end position="116"/>
    </location>
</feature>
<feature type="transmembrane region" description="Helical" evidence="1">
    <location>
        <begin position="225"/>
        <end position="245"/>
    </location>
</feature>
<feature type="transmembrane region" description="Helical" evidence="1">
    <location>
        <begin position="260"/>
        <end position="280"/>
    </location>
</feature>
<feature type="binding site" evidence="1">
    <location>
        <position position="143"/>
    </location>
    <ligand>
        <name>a 1,2-diacyl-sn-glycero-3-phospho-(1'-sn-glycerol)</name>
        <dbReference type="ChEBI" id="CHEBI:64716"/>
    </ligand>
</feature>
<evidence type="ECO:0000255" key="1">
    <source>
        <dbReference type="HAMAP-Rule" id="MF_01147"/>
    </source>
</evidence>
<comment type="function">
    <text evidence="1">Catalyzes the transfer of the diacylglyceryl group from phosphatidylglycerol to the sulfhydryl group of the N-terminal cysteine of a prolipoprotein, the first step in the formation of mature lipoproteins.</text>
</comment>
<comment type="catalytic activity">
    <reaction evidence="1">
        <text>L-cysteinyl-[prolipoprotein] + a 1,2-diacyl-sn-glycero-3-phospho-(1'-sn-glycerol) = an S-1,2-diacyl-sn-glyceryl-L-cysteinyl-[prolipoprotein] + sn-glycerol 1-phosphate + H(+)</text>
        <dbReference type="Rhea" id="RHEA:56712"/>
        <dbReference type="Rhea" id="RHEA-COMP:14679"/>
        <dbReference type="Rhea" id="RHEA-COMP:14680"/>
        <dbReference type="ChEBI" id="CHEBI:15378"/>
        <dbReference type="ChEBI" id="CHEBI:29950"/>
        <dbReference type="ChEBI" id="CHEBI:57685"/>
        <dbReference type="ChEBI" id="CHEBI:64716"/>
        <dbReference type="ChEBI" id="CHEBI:140658"/>
        <dbReference type="EC" id="2.5.1.145"/>
    </reaction>
</comment>
<comment type="pathway">
    <text evidence="1">Protein modification; lipoprotein biosynthesis (diacylglyceryl transfer).</text>
</comment>
<comment type="subcellular location">
    <subcellularLocation>
        <location evidence="1">Cell inner membrane</location>
        <topology evidence="1">Multi-pass membrane protein</topology>
    </subcellularLocation>
</comment>
<comment type="similarity">
    <text evidence="1">Belongs to the Lgt family.</text>
</comment>
<organism>
    <name type="scientific">Escherichia coli O45:K1 (strain S88 / ExPEC)</name>
    <dbReference type="NCBI Taxonomy" id="585035"/>
    <lineage>
        <taxon>Bacteria</taxon>
        <taxon>Pseudomonadati</taxon>
        <taxon>Pseudomonadota</taxon>
        <taxon>Gammaproteobacteria</taxon>
        <taxon>Enterobacterales</taxon>
        <taxon>Enterobacteriaceae</taxon>
        <taxon>Escherichia</taxon>
    </lineage>
</organism>
<sequence>MTSSYLHFPEFDPVIFSIGPVALHWYGLMYLVGFIFAMWLATRRANRPGSGWTKNEVENLLYAGFLGVFLGGRIGYVLFYNFPQFMADPLYLFRVWDGGMSFHGGLIGVIVVMIIFARRTKRSFFQVSDFIAPLIPFGLGAGRLGNFINGELWGRVDPNFPFAMLFPGSRTEDILLLQTNPQWQSIFDTYGVLPRHPSQLYELLLEGVVLFIILNLYIRKPRPMGAVSGLFLIGYGAFRIIVEFFRQPDAQFTGAWVQYISMGQILSIPMIVAGVIMMVWAYRRSPQQHVS</sequence>
<accession>B7MLH4</accession>
<protein>
    <recommendedName>
        <fullName evidence="1">Phosphatidylglycerol--prolipoprotein diacylglyceryl transferase</fullName>
        <ecNumber evidence="1">2.5.1.145</ecNumber>
    </recommendedName>
</protein>
<proteinExistence type="inferred from homology"/>
<reference key="1">
    <citation type="journal article" date="2009" name="PLoS Genet.">
        <title>Organised genome dynamics in the Escherichia coli species results in highly diverse adaptive paths.</title>
        <authorList>
            <person name="Touchon M."/>
            <person name="Hoede C."/>
            <person name="Tenaillon O."/>
            <person name="Barbe V."/>
            <person name="Baeriswyl S."/>
            <person name="Bidet P."/>
            <person name="Bingen E."/>
            <person name="Bonacorsi S."/>
            <person name="Bouchier C."/>
            <person name="Bouvet O."/>
            <person name="Calteau A."/>
            <person name="Chiapello H."/>
            <person name="Clermont O."/>
            <person name="Cruveiller S."/>
            <person name="Danchin A."/>
            <person name="Diard M."/>
            <person name="Dossat C."/>
            <person name="Karoui M.E."/>
            <person name="Frapy E."/>
            <person name="Garry L."/>
            <person name="Ghigo J.M."/>
            <person name="Gilles A.M."/>
            <person name="Johnson J."/>
            <person name="Le Bouguenec C."/>
            <person name="Lescat M."/>
            <person name="Mangenot S."/>
            <person name="Martinez-Jehanne V."/>
            <person name="Matic I."/>
            <person name="Nassif X."/>
            <person name="Oztas S."/>
            <person name="Petit M.A."/>
            <person name="Pichon C."/>
            <person name="Rouy Z."/>
            <person name="Ruf C.S."/>
            <person name="Schneider D."/>
            <person name="Tourret J."/>
            <person name="Vacherie B."/>
            <person name="Vallenet D."/>
            <person name="Medigue C."/>
            <person name="Rocha E.P.C."/>
            <person name="Denamur E."/>
        </authorList>
    </citation>
    <scope>NUCLEOTIDE SEQUENCE [LARGE SCALE GENOMIC DNA]</scope>
    <source>
        <strain>S88 / ExPEC</strain>
    </source>
</reference>
<dbReference type="EC" id="2.5.1.145" evidence="1"/>
<dbReference type="EMBL" id="CU928161">
    <property type="protein sequence ID" value="CAR04363.1"/>
    <property type="molecule type" value="Genomic_DNA"/>
</dbReference>
<dbReference type="RefSeq" id="WP_000204658.1">
    <property type="nucleotide sequence ID" value="NC_011742.1"/>
</dbReference>
<dbReference type="SMR" id="B7MLH4"/>
<dbReference type="GeneID" id="93779170"/>
<dbReference type="KEGG" id="ecz:ECS88_3123"/>
<dbReference type="HOGENOM" id="CLU_013386_1_0_6"/>
<dbReference type="UniPathway" id="UPA00664"/>
<dbReference type="Proteomes" id="UP000000747">
    <property type="component" value="Chromosome"/>
</dbReference>
<dbReference type="GO" id="GO:0005886">
    <property type="term" value="C:plasma membrane"/>
    <property type="evidence" value="ECO:0007669"/>
    <property type="project" value="UniProtKB-SubCell"/>
</dbReference>
<dbReference type="GO" id="GO:0008961">
    <property type="term" value="F:phosphatidylglycerol-prolipoprotein diacylglyceryl transferase activity"/>
    <property type="evidence" value="ECO:0007669"/>
    <property type="project" value="UniProtKB-UniRule"/>
</dbReference>
<dbReference type="GO" id="GO:0042158">
    <property type="term" value="P:lipoprotein biosynthetic process"/>
    <property type="evidence" value="ECO:0007669"/>
    <property type="project" value="UniProtKB-UniRule"/>
</dbReference>
<dbReference type="HAMAP" id="MF_01147">
    <property type="entry name" value="Lgt"/>
    <property type="match status" value="1"/>
</dbReference>
<dbReference type="InterPro" id="IPR001640">
    <property type="entry name" value="Lgt"/>
</dbReference>
<dbReference type="NCBIfam" id="TIGR00544">
    <property type="entry name" value="lgt"/>
    <property type="match status" value="1"/>
</dbReference>
<dbReference type="PANTHER" id="PTHR30589:SF0">
    <property type="entry name" value="PHOSPHATIDYLGLYCEROL--PROLIPOPROTEIN DIACYLGLYCERYL TRANSFERASE"/>
    <property type="match status" value="1"/>
</dbReference>
<dbReference type="PANTHER" id="PTHR30589">
    <property type="entry name" value="PROLIPOPROTEIN DIACYLGLYCERYL TRANSFERASE"/>
    <property type="match status" value="1"/>
</dbReference>
<dbReference type="Pfam" id="PF01790">
    <property type="entry name" value="LGT"/>
    <property type="match status" value="1"/>
</dbReference>
<dbReference type="PROSITE" id="PS01311">
    <property type="entry name" value="LGT"/>
    <property type="match status" value="1"/>
</dbReference>
<name>LGT_ECO45</name>
<keyword id="KW-0997">Cell inner membrane</keyword>
<keyword id="KW-1003">Cell membrane</keyword>
<keyword id="KW-0472">Membrane</keyword>
<keyword id="KW-1185">Reference proteome</keyword>
<keyword id="KW-0808">Transferase</keyword>
<keyword id="KW-0812">Transmembrane</keyword>
<keyword id="KW-1133">Transmembrane helix</keyword>